<sequence>MKTVVFAYHDMGCLGIEALLAAGYEISAIFTHTDNPGEKAFYGSVARLAAERGIPVYAPDDVNHPLWVERIAQLSPDVIFSFYYRHLICDEILQLAPAGAFNLHGSLLPKYRGRAPLNWVLVNGETETGVTLHRMVKRADAGAIVAQLRIAIAPDDIAITLHHKLCHAARQLLEQTLPAIKHGNILEIAQRENEATCFGRRTPDDSFLEWHKPASVLHNMVRAVADPWPGAFSYVGNQKFTVWSSRVHPHASKAQPGSVISVAPLLIACGDGALEIVTGQAGDGITMQGSQLAQTLGLVQGSRLNSQPACTARRRTRVLILGVNGFIGNHLTERLLREDHYEVYGLDIGSDAISRFLNHPHFHFVEGDISIHSEWIEYHVKKCDVVLPLVAIATPIEYTRNPLRVFELDFEENLRIIRYCVKYRKRIIFPSTSEVYGMCSDKYFDEDHSNLIVGPVNKPRWIYSVSKQLLDRVIWAYGEKEGLQFTLFRPFNWMGPRLDNLNAARIGSSRAITQLILNLVEGSPIKLIDGGKQKRCFTDIRDGIEALYRIIENAGNRCDGEIINIGNPENEASIEELGEMLLASFEKHPLRHHFPPFAGFRVVESSSYYGKGYQDVEHRKPSIRNAHRCLDWEPKIDMQETIDETLDFFLRTVDLTDKPS</sequence>
<accession>B7LAS0</accession>
<comment type="function">
    <text evidence="1">Bifunctional enzyme that catalyzes the oxidative decarboxylation of UDP-glucuronic acid (UDP-GlcUA) to UDP-4-keto-arabinose (UDP-Ara4O) and the addition of a formyl group to UDP-4-amino-4-deoxy-L-arabinose (UDP-L-Ara4N) to form UDP-L-4-formamido-arabinose (UDP-L-Ara4FN). The modified arabinose is attached to lipid A and is required for resistance to polymyxin and cationic antimicrobial peptides.</text>
</comment>
<comment type="catalytic activity">
    <reaction evidence="1">
        <text>UDP-alpha-D-glucuronate + NAD(+) = UDP-beta-L-threo-pentopyranos-4-ulose + CO2 + NADH</text>
        <dbReference type="Rhea" id="RHEA:24702"/>
        <dbReference type="ChEBI" id="CHEBI:16526"/>
        <dbReference type="ChEBI" id="CHEBI:57540"/>
        <dbReference type="ChEBI" id="CHEBI:57945"/>
        <dbReference type="ChEBI" id="CHEBI:58052"/>
        <dbReference type="ChEBI" id="CHEBI:58710"/>
        <dbReference type="EC" id="1.1.1.305"/>
    </reaction>
</comment>
<comment type="catalytic activity">
    <reaction evidence="1">
        <text>UDP-4-amino-4-deoxy-beta-L-arabinose + (6R)-10-formyltetrahydrofolate = UDP-4-deoxy-4-formamido-beta-L-arabinose + (6S)-5,6,7,8-tetrahydrofolate + H(+)</text>
        <dbReference type="Rhea" id="RHEA:24706"/>
        <dbReference type="ChEBI" id="CHEBI:15378"/>
        <dbReference type="ChEBI" id="CHEBI:57453"/>
        <dbReference type="ChEBI" id="CHEBI:58708"/>
        <dbReference type="ChEBI" id="CHEBI:58709"/>
        <dbReference type="ChEBI" id="CHEBI:195366"/>
        <dbReference type="EC" id="2.1.2.13"/>
    </reaction>
</comment>
<comment type="pathway">
    <text evidence="1">Nucleotide-sugar biosynthesis; UDP-4-deoxy-4-formamido-beta-L-arabinose biosynthesis; UDP-4-deoxy-4-formamido-beta-L-arabinose from UDP-alpha-D-glucuronate: step 1/3.</text>
</comment>
<comment type="pathway">
    <text evidence="1">Nucleotide-sugar biosynthesis; UDP-4-deoxy-4-formamido-beta-L-arabinose biosynthesis; UDP-4-deoxy-4-formamido-beta-L-arabinose from UDP-alpha-D-glucuronate: step 3/3.</text>
</comment>
<comment type="pathway">
    <text evidence="1">Bacterial outer membrane biogenesis; lipopolysaccharide biosynthesis.</text>
</comment>
<comment type="subunit">
    <text evidence="1">Homohexamer, formed by a dimer of trimers.</text>
</comment>
<comment type="similarity">
    <text evidence="1">In the N-terminal section; belongs to the Fmt family. UDP-L-Ara4N formyltransferase subfamily.</text>
</comment>
<comment type="similarity">
    <text evidence="1">In the C-terminal section; belongs to the NAD(P)-dependent epimerase/dehydratase family. UDP-glucuronic acid decarboxylase subfamily.</text>
</comment>
<dbReference type="EC" id="2.1.2.13" evidence="1"/>
<dbReference type="EC" id="1.1.1.305" evidence="1"/>
<dbReference type="EMBL" id="CU928145">
    <property type="protein sequence ID" value="CAU98370.1"/>
    <property type="molecule type" value="Genomic_DNA"/>
</dbReference>
<dbReference type="RefSeq" id="WP_000860259.1">
    <property type="nucleotide sequence ID" value="NC_011748.1"/>
</dbReference>
<dbReference type="SMR" id="B7LAS0"/>
<dbReference type="KEGG" id="eck:EC55989_2501"/>
<dbReference type="HOGENOM" id="CLU_007383_23_2_6"/>
<dbReference type="UniPathway" id="UPA00030"/>
<dbReference type="UniPathway" id="UPA00032">
    <property type="reaction ID" value="UER00492"/>
</dbReference>
<dbReference type="UniPathway" id="UPA00032">
    <property type="reaction ID" value="UER00494"/>
</dbReference>
<dbReference type="Proteomes" id="UP000000746">
    <property type="component" value="Chromosome"/>
</dbReference>
<dbReference type="GO" id="GO:0016020">
    <property type="term" value="C:membrane"/>
    <property type="evidence" value="ECO:0007669"/>
    <property type="project" value="GOC"/>
</dbReference>
<dbReference type="GO" id="GO:0016831">
    <property type="term" value="F:carboxy-lyase activity"/>
    <property type="evidence" value="ECO:0007669"/>
    <property type="project" value="InterPro"/>
</dbReference>
<dbReference type="GO" id="GO:0099619">
    <property type="term" value="F:UDP-4-amino-4-deoxy-L-arabinose formyltransferase activity"/>
    <property type="evidence" value="ECO:0007669"/>
    <property type="project" value="UniProtKB-EC"/>
</dbReference>
<dbReference type="GO" id="GO:0099618">
    <property type="term" value="F:UDP-glucuronate dehydrogenase activity"/>
    <property type="evidence" value="ECO:0007669"/>
    <property type="project" value="UniProtKB-EC"/>
</dbReference>
<dbReference type="GO" id="GO:0009245">
    <property type="term" value="P:lipid A biosynthetic process"/>
    <property type="evidence" value="ECO:0007669"/>
    <property type="project" value="UniProtKB-KW"/>
</dbReference>
<dbReference type="GO" id="GO:0009103">
    <property type="term" value="P:lipopolysaccharide biosynthetic process"/>
    <property type="evidence" value="ECO:0007669"/>
    <property type="project" value="UniProtKB-UniRule"/>
</dbReference>
<dbReference type="GO" id="GO:0046677">
    <property type="term" value="P:response to antibiotic"/>
    <property type="evidence" value="ECO:0007669"/>
    <property type="project" value="UniProtKB-KW"/>
</dbReference>
<dbReference type="CDD" id="cd08702">
    <property type="entry name" value="Arna_FMT_C"/>
    <property type="match status" value="1"/>
</dbReference>
<dbReference type="CDD" id="cd05257">
    <property type="entry name" value="Arna_like_SDR_e"/>
    <property type="match status" value="1"/>
</dbReference>
<dbReference type="CDD" id="cd08644">
    <property type="entry name" value="FMT_core_ArnA_N"/>
    <property type="match status" value="1"/>
</dbReference>
<dbReference type="FunFam" id="3.40.50.12230:FF:000002">
    <property type="entry name" value="Bifunctional polymyxin resistance protein ArnA"/>
    <property type="match status" value="1"/>
</dbReference>
<dbReference type="FunFam" id="3.40.50.720:FF:000197">
    <property type="entry name" value="Bifunctional polymyxin resistance protein ArnA"/>
    <property type="match status" value="1"/>
</dbReference>
<dbReference type="Gene3D" id="3.40.50.12230">
    <property type="match status" value="1"/>
</dbReference>
<dbReference type="Gene3D" id="3.40.50.720">
    <property type="entry name" value="NAD(P)-binding Rossmann-like Domain"/>
    <property type="match status" value="1"/>
</dbReference>
<dbReference type="HAMAP" id="MF_01166">
    <property type="entry name" value="ArnA"/>
    <property type="match status" value="1"/>
</dbReference>
<dbReference type="InterPro" id="IPR045869">
    <property type="entry name" value="Arna-like_SDR_e"/>
</dbReference>
<dbReference type="InterPro" id="IPR021168">
    <property type="entry name" value="Bifun_polymyxin_resist_ArnA"/>
</dbReference>
<dbReference type="InterPro" id="IPR001509">
    <property type="entry name" value="Epimerase_deHydtase"/>
</dbReference>
<dbReference type="InterPro" id="IPR005793">
    <property type="entry name" value="Formyl_trans_C"/>
</dbReference>
<dbReference type="InterPro" id="IPR002376">
    <property type="entry name" value="Formyl_transf_N"/>
</dbReference>
<dbReference type="InterPro" id="IPR036477">
    <property type="entry name" value="Formyl_transf_N_sf"/>
</dbReference>
<dbReference type="InterPro" id="IPR011034">
    <property type="entry name" value="Formyl_transferase-like_C_sf"/>
</dbReference>
<dbReference type="InterPro" id="IPR050177">
    <property type="entry name" value="Lipid_A_modif_metabolic_enz"/>
</dbReference>
<dbReference type="InterPro" id="IPR036291">
    <property type="entry name" value="NAD(P)-bd_dom_sf"/>
</dbReference>
<dbReference type="NCBIfam" id="NF005414">
    <property type="entry name" value="PRK06988.1"/>
    <property type="match status" value="1"/>
</dbReference>
<dbReference type="NCBIfam" id="NF005998">
    <property type="entry name" value="PRK08125.1"/>
    <property type="match status" value="1"/>
</dbReference>
<dbReference type="NCBIfam" id="NF008872">
    <property type="entry name" value="PRK11908.1"/>
    <property type="match status" value="1"/>
</dbReference>
<dbReference type="PANTHER" id="PTHR43245">
    <property type="entry name" value="BIFUNCTIONAL POLYMYXIN RESISTANCE PROTEIN ARNA"/>
    <property type="match status" value="1"/>
</dbReference>
<dbReference type="PANTHER" id="PTHR43245:SF13">
    <property type="entry name" value="UDP-D-APIOSE_UDP-D-XYLOSE SYNTHASE 2"/>
    <property type="match status" value="1"/>
</dbReference>
<dbReference type="Pfam" id="PF01370">
    <property type="entry name" value="Epimerase"/>
    <property type="match status" value="1"/>
</dbReference>
<dbReference type="Pfam" id="PF02911">
    <property type="entry name" value="Formyl_trans_C"/>
    <property type="match status" value="1"/>
</dbReference>
<dbReference type="Pfam" id="PF00551">
    <property type="entry name" value="Formyl_trans_N"/>
    <property type="match status" value="1"/>
</dbReference>
<dbReference type="PIRSF" id="PIRSF036506">
    <property type="entry name" value="Bifun_polymyxin_resist_ArnA"/>
    <property type="match status" value="1"/>
</dbReference>
<dbReference type="SUPFAM" id="SSF50486">
    <property type="entry name" value="FMT C-terminal domain-like"/>
    <property type="match status" value="1"/>
</dbReference>
<dbReference type="SUPFAM" id="SSF53328">
    <property type="entry name" value="Formyltransferase"/>
    <property type="match status" value="1"/>
</dbReference>
<dbReference type="SUPFAM" id="SSF51735">
    <property type="entry name" value="NAD(P)-binding Rossmann-fold domains"/>
    <property type="match status" value="1"/>
</dbReference>
<keyword id="KW-0046">Antibiotic resistance</keyword>
<keyword id="KW-0441">Lipid A biosynthesis</keyword>
<keyword id="KW-0444">Lipid biosynthesis</keyword>
<keyword id="KW-0443">Lipid metabolism</keyword>
<keyword id="KW-0448">Lipopolysaccharide biosynthesis</keyword>
<keyword id="KW-0511">Multifunctional enzyme</keyword>
<keyword id="KW-0520">NAD</keyword>
<keyword id="KW-0560">Oxidoreductase</keyword>
<keyword id="KW-1185">Reference proteome</keyword>
<keyword id="KW-0808">Transferase</keyword>
<proteinExistence type="inferred from homology"/>
<reference key="1">
    <citation type="journal article" date="2009" name="PLoS Genet.">
        <title>Organised genome dynamics in the Escherichia coli species results in highly diverse adaptive paths.</title>
        <authorList>
            <person name="Touchon M."/>
            <person name="Hoede C."/>
            <person name="Tenaillon O."/>
            <person name="Barbe V."/>
            <person name="Baeriswyl S."/>
            <person name="Bidet P."/>
            <person name="Bingen E."/>
            <person name="Bonacorsi S."/>
            <person name="Bouchier C."/>
            <person name="Bouvet O."/>
            <person name="Calteau A."/>
            <person name="Chiapello H."/>
            <person name="Clermont O."/>
            <person name="Cruveiller S."/>
            <person name="Danchin A."/>
            <person name="Diard M."/>
            <person name="Dossat C."/>
            <person name="Karoui M.E."/>
            <person name="Frapy E."/>
            <person name="Garry L."/>
            <person name="Ghigo J.M."/>
            <person name="Gilles A.M."/>
            <person name="Johnson J."/>
            <person name="Le Bouguenec C."/>
            <person name="Lescat M."/>
            <person name="Mangenot S."/>
            <person name="Martinez-Jehanne V."/>
            <person name="Matic I."/>
            <person name="Nassif X."/>
            <person name="Oztas S."/>
            <person name="Petit M.A."/>
            <person name="Pichon C."/>
            <person name="Rouy Z."/>
            <person name="Ruf C.S."/>
            <person name="Schneider D."/>
            <person name="Tourret J."/>
            <person name="Vacherie B."/>
            <person name="Vallenet D."/>
            <person name="Medigue C."/>
            <person name="Rocha E.P.C."/>
            <person name="Denamur E."/>
        </authorList>
    </citation>
    <scope>NUCLEOTIDE SEQUENCE [LARGE SCALE GENOMIC DNA]</scope>
    <source>
        <strain>55989 / EAEC</strain>
    </source>
</reference>
<protein>
    <recommendedName>
        <fullName evidence="1">Bifunctional polymyxin resistance protein ArnA</fullName>
    </recommendedName>
    <domain>
        <recommendedName>
            <fullName evidence="1">UDP-4-amino-4-deoxy-L-arabinose formyltransferase</fullName>
            <ecNumber evidence="1">2.1.2.13</ecNumber>
        </recommendedName>
        <alternativeName>
            <fullName evidence="1">ArnAFT</fullName>
        </alternativeName>
        <alternativeName>
            <fullName evidence="1">UDP-L-Ara4N formyltransferase</fullName>
        </alternativeName>
    </domain>
    <domain>
        <recommendedName>
            <fullName evidence="1">UDP-glucuronic acid oxidase, UDP-4-keto-hexauronic acid decarboxylating</fullName>
            <ecNumber evidence="1">1.1.1.305</ecNumber>
        </recommendedName>
        <alternativeName>
            <fullName evidence="1">ArnADH</fullName>
        </alternativeName>
        <alternativeName>
            <fullName evidence="1">UDP-GlcUA decarboxylase</fullName>
        </alternativeName>
        <alternativeName>
            <fullName evidence="1">UDP-glucuronic acid dehydrogenase</fullName>
        </alternativeName>
    </domain>
</protein>
<evidence type="ECO:0000255" key="1">
    <source>
        <dbReference type="HAMAP-Rule" id="MF_01166"/>
    </source>
</evidence>
<name>ARNA_ECO55</name>
<gene>
    <name evidence="1" type="primary">arnA</name>
    <name type="ordered locus">EC55989_2501</name>
</gene>
<feature type="chain" id="PRO_0000379986" description="Bifunctional polymyxin resistance protein ArnA">
    <location>
        <begin position="1"/>
        <end position="660"/>
    </location>
</feature>
<feature type="region of interest" description="Formyltransferase ArnAFT">
    <location>
        <begin position="1"/>
        <end position="304"/>
    </location>
</feature>
<feature type="region of interest" description="Dehydrogenase ArnADH">
    <location>
        <begin position="314"/>
        <end position="660"/>
    </location>
</feature>
<feature type="active site" description="Proton donor; for formyltransferase activity" evidence="1">
    <location>
        <position position="104"/>
    </location>
</feature>
<feature type="active site" description="Proton acceptor; for decarboxylase activity" evidence="1">
    <location>
        <position position="434"/>
    </location>
</feature>
<feature type="active site" description="Proton donor; for decarboxylase activity" evidence="1">
    <location>
        <position position="619"/>
    </location>
</feature>
<feature type="binding site" evidence="1">
    <location>
        <begin position="86"/>
        <end position="88"/>
    </location>
    <ligand>
        <name>(6R)-10-formyltetrahydrofolate</name>
        <dbReference type="ChEBI" id="CHEBI:195366"/>
    </ligand>
</feature>
<feature type="binding site" evidence="1">
    <location>
        <position position="114"/>
    </location>
    <ligand>
        <name>(6R)-10-formyltetrahydrofolate</name>
        <dbReference type="ChEBI" id="CHEBI:195366"/>
    </ligand>
</feature>
<feature type="binding site" evidence="1">
    <location>
        <begin position="136"/>
        <end position="140"/>
    </location>
    <ligand>
        <name>(6R)-10-formyltetrahydrofolate</name>
        <dbReference type="ChEBI" id="CHEBI:195366"/>
    </ligand>
</feature>
<feature type="binding site" evidence="1">
    <location>
        <position position="347"/>
    </location>
    <ligand>
        <name>NAD(+)</name>
        <dbReference type="ChEBI" id="CHEBI:57540"/>
    </ligand>
</feature>
<feature type="binding site" evidence="1">
    <location>
        <begin position="368"/>
        <end position="369"/>
    </location>
    <ligand>
        <name>NAD(+)</name>
        <dbReference type="ChEBI" id="CHEBI:57540"/>
    </ligand>
</feature>
<feature type="binding site" evidence="1">
    <location>
        <position position="393"/>
    </location>
    <ligand>
        <name>UDP-alpha-D-glucuronate</name>
        <dbReference type="ChEBI" id="CHEBI:58052"/>
    </ligand>
</feature>
<feature type="binding site" evidence="1">
    <location>
        <position position="398"/>
    </location>
    <ligand>
        <name>UDP-alpha-D-glucuronate</name>
        <dbReference type="ChEBI" id="CHEBI:58052"/>
    </ligand>
</feature>
<feature type="binding site" evidence="1">
    <location>
        <begin position="432"/>
        <end position="433"/>
    </location>
    <ligand>
        <name>UDP-alpha-D-glucuronate</name>
        <dbReference type="ChEBI" id="CHEBI:58052"/>
    </ligand>
</feature>
<feature type="binding site" evidence="1">
    <location>
        <position position="460"/>
    </location>
    <ligand>
        <name>UDP-alpha-D-glucuronate</name>
        <dbReference type="ChEBI" id="CHEBI:58052"/>
    </ligand>
</feature>
<feature type="binding site" evidence="1">
    <location>
        <position position="492"/>
    </location>
    <ligand>
        <name>UDP-alpha-D-glucuronate</name>
        <dbReference type="ChEBI" id="CHEBI:58052"/>
    </ligand>
</feature>
<feature type="binding site" evidence="1">
    <location>
        <begin position="526"/>
        <end position="535"/>
    </location>
    <ligand>
        <name>UDP-alpha-D-glucuronate</name>
        <dbReference type="ChEBI" id="CHEBI:58052"/>
    </ligand>
</feature>
<feature type="binding site" evidence="1">
    <location>
        <position position="613"/>
    </location>
    <ligand>
        <name>UDP-alpha-D-glucuronate</name>
        <dbReference type="ChEBI" id="CHEBI:58052"/>
    </ligand>
</feature>
<feature type="site" description="Transition state stabilizer" evidence="1">
    <location>
        <position position="102"/>
    </location>
</feature>
<feature type="site" description="Raises pKa of active site His" evidence="1">
    <location>
        <position position="140"/>
    </location>
</feature>
<organism>
    <name type="scientific">Escherichia coli (strain 55989 / EAEC)</name>
    <dbReference type="NCBI Taxonomy" id="585055"/>
    <lineage>
        <taxon>Bacteria</taxon>
        <taxon>Pseudomonadati</taxon>
        <taxon>Pseudomonadota</taxon>
        <taxon>Gammaproteobacteria</taxon>
        <taxon>Enterobacterales</taxon>
        <taxon>Enterobacteriaceae</taxon>
        <taxon>Escherichia</taxon>
    </lineage>
</organism>